<gene>
    <name evidence="2" type="primary">betI</name>
    <name type="ordered locus">Bcen2424_5098</name>
</gene>
<sequence length="194" mass="21330">MPKVGMREIRRAQLIDATLRSIDEAGLPGTTLASVAQRANISTGIVSHYFGDKDGLLEATMRHVLRDLWSATTRRRVAARKDPRSRLRAVVAANFDDTQVSAPVMKTWLAFWSQSMHDPMLKRLQHVNTRRLHSNLCAEFAKALPLAKAREAASGLAALIDGLWLRGALAGGPIDTRAALKLAHDYIDLLLASD</sequence>
<proteinExistence type="inferred from homology"/>
<organism>
    <name type="scientific">Burkholderia cenocepacia (strain HI2424)</name>
    <dbReference type="NCBI Taxonomy" id="331272"/>
    <lineage>
        <taxon>Bacteria</taxon>
        <taxon>Pseudomonadati</taxon>
        <taxon>Pseudomonadota</taxon>
        <taxon>Betaproteobacteria</taxon>
        <taxon>Burkholderiales</taxon>
        <taxon>Burkholderiaceae</taxon>
        <taxon>Burkholderia</taxon>
        <taxon>Burkholderia cepacia complex</taxon>
    </lineage>
</organism>
<keyword id="KW-0238">DNA-binding</keyword>
<keyword id="KW-0678">Repressor</keyword>
<keyword id="KW-0804">Transcription</keyword>
<keyword id="KW-0805">Transcription regulation</keyword>
<name>BETI_BURCH</name>
<evidence type="ECO:0000250" key="1"/>
<evidence type="ECO:0000255" key="2">
    <source>
        <dbReference type="HAMAP-Rule" id="MF_00768"/>
    </source>
</evidence>
<protein>
    <recommendedName>
        <fullName evidence="2">HTH-type transcriptional regulator BetI</fullName>
    </recommendedName>
</protein>
<feature type="chain" id="PRO_1000083553" description="HTH-type transcriptional regulator BetI">
    <location>
        <begin position="1"/>
        <end position="194"/>
    </location>
</feature>
<feature type="domain" description="HTH tetR-type" evidence="2">
    <location>
        <begin position="8"/>
        <end position="68"/>
    </location>
</feature>
<feature type="DNA-binding region" description="H-T-H motif" evidence="2">
    <location>
        <begin position="31"/>
        <end position="50"/>
    </location>
</feature>
<comment type="function">
    <text evidence="1">Repressor involved in the biosynthesis of the osmoprotectant glycine betaine. It represses transcription of the choline transporter BetT and the genes of BetAB involved in the synthesis of glycine betaine (By similarity).</text>
</comment>
<comment type="pathway">
    <text>Amine and polyamine biosynthesis; betaine biosynthesis via choline pathway [regulation].</text>
</comment>
<reference key="1">
    <citation type="submission" date="2006-08" db="EMBL/GenBank/DDBJ databases">
        <title>Complete sequence of chromosome 2 of Burkholderia cenocepacia HI2424.</title>
        <authorList>
            <person name="Copeland A."/>
            <person name="Lucas S."/>
            <person name="Lapidus A."/>
            <person name="Barry K."/>
            <person name="Detter J.C."/>
            <person name="Glavina del Rio T."/>
            <person name="Hammon N."/>
            <person name="Israni S."/>
            <person name="Pitluck S."/>
            <person name="Chain P."/>
            <person name="Malfatti S."/>
            <person name="Shin M."/>
            <person name="Vergez L."/>
            <person name="Schmutz J."/>
            <person name="Larimer F."/>
            <person name="Land M."/>
            <person name="Hauser L."/>
            <person name="Kyrpides N."/>
            <person name="Kim E."/>
            <person name="LiPuma J.J."/>
            <person name="Gonzalez C.F."/>
            <person name="Konstantinidis K."/>
            <person name="Tiedje J.M."/>
            <person name="Richardson P."/>
        </authorList>
    </citation>
    <scope>NUCLEOTIDE SEQUENCE [LARGE SCALE GENOMIC DNA]</scope>
    <source>
        <strain>HI2424</strain>
    </source>
</reference>
<dbReference type="EMBL" id="CP000459">
    <property type="protein sequence ID" value="ABK11831.1"/>
    <property type="molecule type" value="Genomic_DNA"/>
</dbReference>
<dbReference type="RefSeq" id="WP_006480642.1">
    <property type="nucleotide sequence ID" value="NC_008543.1"/>
</dbReference>
<dbReference type="SMR" id="A0B2F5"/>
<dbReference type="GeneID" id="83051872"/>
<dbReference type="KEGG" id="bch:Bcen2424_5098"/>
<dbReference type="HOGENOM" id="CLU_069356_15_4_4"/>
<dbReference type="UniPathway" id="UPA00529"/>
<dbReference type="GO" id="GO:0003700">
    <property type="term" value="F:DNA-binding transcription factor activity"/>
    <property type="evidence" value="ECO:0007669"/>
    <property type="project" value="UniProtKB-UniRule"/>
</dbReference>
<dbReference type="GO" id="GO:0000976">
    <property type="term" value="F:transcription cis-regulatory region binding"/>
    <property type="evidence" value="ECO:0007669"/>
    <property type="project" value="TreeGrafter"/>
</dbReference>
<dbReference type="GO" id="GO:0019285">
    <property type="term" value="P:glycine betaine biosynthetic process from choline"/>
    <property type="evidence" value="ECO:0007669"/>
    <property type="project" value="UniProtKB-UniRule"/>
</dbReference>
<dbReference type="GO" id="GO:0045892">
    <property type="term" value="P:negative regulation of DNA-templated transcription"/>
    <property type="evidence" value="ECO:0007669"/>
    <property type="project" value="UniProtKB-UniRule"/>
</dbReference>
<dbReference type="Gene3D" id="1.10.357.10">
    <property type="entry name" value="Tetracycline Repressor, domain 2"/>
    <property type="match status" value="1"/>
</dbReference>
<dbReference type="HAMAP" id="MF_00768">
    <property type="entry name" value="HTH_type_BetI"/>
    <property type="match status" value="1"/>
</dbReference>
<dbReference type="InterPro" id="IPR039538">
    <property type="entry name" value="BetI_C"/>
</dbReference>
<dbReference type="InterPro" id="IPR023772">
    <property type="entry name" value="DNA-bd_HTH_TetR-type_CS"/>
</dbReference>
<dbReference type="InterPro" id="IPR009057">
    <property type="entry name" value="Homeodomain-like_sf"/>
</dbReference>
<dbReference type="InterPro" id="IPR050109">
    <property type="entry name" value="HTH-type_TetR-like_transc_reg"/>
</dbReference>
<dbReference type="InterPro" id="IPR001647">
    <property type="entry name" value="HTH_TetR"/>
</dbReference>
<dbReference type="InterPro" id="IPR036271">
    <property type="entry name" value="Tet_transcr_reg_TetR-rel_C_sf"/>
</dbReference>
<dbReference type="InterPro" id="IPR017757">
    <property type="entry name" value="Tscrpt_rep_BetI"/>
</dbReference>
<dbReference type="NCBIfam" id="TIGR03384">
    <property type="entry name" value="betaine_BetI"/>
    <property type="match status" value="1"/>
</dbReference>
<dbReference type="NCBIfam" id="NF001978">
    <property type="entry name" value="PRK00767.1"/>
    <property type="match status" value="1"/>
</dbReference>
<dbReference type="PANTHER" id="PTHR30055:SF234">
    <property type="entry name" value="HTH-TYPE TRANSCRIPTIONAL REGULATOR BETI"/>
    <property type="match status" value="1"/>
</dbReference>
<dbReference type="PANTHER" id="PTHR30055">
    <property type="entry name" value="HTH-TYPE TRANSCRIPTIONAL REGULATOR RUTR"/>
    <property type="match status" value="1"/>
</dbReference>
<dbReference type="Pfam" id="PF13977">
    <property type="entry name" value="TetR_C_6"/>
    <property type="match status" value="1"/>
</dbReference>
<dbReference type="Pfam" id="PF00440">
    <property type="entry name" value="TetR_N"/>
    <property type="match status" value="1"/>
</dbReference>
<dbReference type="SUPFAM" id="SSF46689">
    <property type="entry name" value="Homeodomain-like"/>
    <property type="match status" value="1"/>
</dbReference>
<dbReference type="SUPFAM" id="SSF48498">
    <property type="entry name" value="Tetracyclin repressor-like, C-terminal domain"/>
    <property type="match status" value="1"/>
</dbReference>
<dbReference type="PROSITE" id="PS01081">
    <property type="entry name" value="HTH_TETR_1"/>
    <property type="match status" value="1"/>
</dbReference>
<dbReference type="PROSITE" id="PS50977">
    <property type="entry name" value="HTH_TETR_2"/>
    <property type="match status" value="1"/>
</dbReference>
<accession>A0B2F5</accession>